<protein>
    <recommendedName>
        <fullName>Basic immunoglobulin-like variable motif-containing protein</fullName>
    </recommendedName>
</protein>
<name>BIVM_XENTR</name>
<proteinExistence type="evidence at transcript level"/>
<feature type="chain" id="PRO_0000328958" description="Basic immunoglobulin-like variable motif-containing protein">
    <location>
        <begin position="1"/>
        <end position="499"/>
    </location>
</feature>
<feature type="region of interest" description="Disordered" evidence="2">
    <location>
        <begin position="1"/>
        <end position="29"/>
    </location>
</feature>
<feature type="region of interest" description="Disordered" evidence="2">
    <location>
        <begin position="153"/>
        <end position="172"/>
    </location>
</feature>
<feature type="region of interest" description="Disordered" evidence="2">
    <location>
        <begin position="428"/>
        <end position="465"/>
    </location>
</feature>
<feature type="compositionally biased region" description="Polar residues" evidence="2">
    <location>
        <begin position="153"/>
        <end position="162"/>
    </location>
</feature>
<feature type="compositionally biased region" description="Basic and acidic residues" evidence="2">
    <location>
        <begin position="444"/>
        <end position="453"/>
    </location>
</feature>
<accession>Q0V9T8</accession>
<gene>
    <name type="primary">bivm</name>
</gene>
<sequence>MPNIEADRVTSIPENNDRKPKSQPLRNNLHDTVKSYSIRDAATANIGPPAERHYPWGCPVTHTKEKFYTICADYAFLNQATSLCKSSSSVCSSSSEDKSALSNTINYIDLQTSESDSACNEDASLDSLSGSLGTRPLAWEIDTSDFSTMTTRLKSRSGVNKQTPKKKTERKAKPLRDCPQHLILDDVKQRKVLDLRRWYCISRPQYKTSCGISSLVSCWNFLYSTLGAGSLPPITQEEALHILGFQPPFEEIRFGPFTGNTTLMRWFRQINDHYHVKGCSYVLYKPHGKNKTAGETAVGALSKLTQGLKEDSTAYIYHCQNHYFCPIGFEATPAKASKAYRGQLFPHEVEYWILIGEPSRKHPTIHCKKWTDIVTDLNTQNPEYFDIRHPERGLQYRKTKKVGGNLHCLLAFQRLSWQRFGPWPLQLGNLRPEPQPPIQGRRIPKSESEDNVSKKQHGRLGRSFSAGFQQELAWKRMCNIRERRGSGSPESDTDCEGND</sequence>
<keyword id="KW-0963">Cytoplasm</keyword>
<keyword id="KW-0539">Nucleus</keyword>
<keyword id="KW-1185">Reference proteome</keyword>
<evidence type="ECO:0000250" key="1"/>
<evidence type="ECO:0000256" key="2">
    <source>
        <dbReference type="SAM" id="MobiDB-lite"/>
    </source>
</evidence>
<evidence type="ECO:0000305" key="3"/>
<organism>
    <name type="scientific">Xenopus tropicalis</name>
    <name type="common">Western clawed frog</name>
    <name type="synonym">Silurana tropicalis</name>
    <dbReference type="NCBI Taxonomy" id="8364"/>
    <lineage>
        <taxon>Eukaryota</taxon>
        <taxon>Metazoa</taxon>
        <taxon>Chordata</taxon>
        <taxon>Craniata</taxon>
        <taxon>Vertebrata</taxon>
        <taxon>Euteleostomi</taxon>
        <taxon>Amphibia</taxon>
        <taxon>Batrachia</taxon>
        <taxon>Anura</taxon>
        <taxon>Pipoidea</taxon>
        <taxon>Pipidae</taxon>
        <taxon>Xenopodinae</taxon>
        <taxon>Xenopus</taxon>
        <taxon>Silurana</taxon>
    </lineage>
</organism>
<dbReference type="EMBL" id="BC121399">
    <property type="protein sequence ID" value="AAI21400.1"/>
    <property type="molecule type" value="mRNA"/>
</dbReference>
<dbReference type="RefSeq" id="NP_001072918.1">
    <property type="nucleotide sequence ID" value="NM_001079450.1"/>
</dbReference>
<dbReference type="RefSeq" id="XP_012812789.1">
    <property type="nucleotide sequence ID" value="XM_012957335.3"/>
</dbReference>
<dbReference type="RefSeq" id="XP_012812790.1">
    <property type="nucleotide sequence ID" value="XM_012957336.3"/>
</dbReference>
<dbReference type="RefSeq" id="XP_012812791.1">
    <property type="nucleotide sequence ID" value="XM_012957337.3"/>
</dbReference>
<dbReference type="FunCoup" id="Q0V9T8">
    <property type="interactions" value="266"/>
</dbReference>
<dbReference type="STRING" id="8364.ENSXETP00000017745"/>
<dbReference type="PaxDb" id="8364-ENSXETP00000005980"/>
<dbReference type="DNASU" id="780380"/>
<dbReference type="GeneID" id="780380"/>
<dbReference type="KEGG" id="xtr:780380"/>
<dbReference type="AGR" id="Xenbase:XB-GENE-976555"/>
<dbReference type="CTD" id="54841"/>
<dbReference type="eggNOG" id="KOG2520">
    <property type="taxonomic scope" value="Eukaryota"/>
</dbReference>
<dbReference type="HOGENOM" id="CLU_041921_1_0_1"/>
<dbReference type="InParanoid" id="Q0V9T8"/>
<dbReference type="OMA" id="HCLMAFQ"/>
<dbReference type="OrthoDB" id="31113at2759"/>
<dbReference type="PhylomeDB" id="Q0V9T8"/>
<dbReference type="Proteomes" id="UP000008143">
    <property type="component" value="Chromosome 2"/>
</dbReference>
<dbReference type="GO" id="GO:0005737">
    <property type="term" value="C:cytoplasm"/>
    <property type="evidence" value="ECO:0007669"/>
    <property type="project" value="UniProtKB-SubCell"/>
</dbReference>
<dbReference type="GO" id="GO:0005634">
    <property type="term" value="C:nucleus"/>
    <property type="evidence" value="ECO:0007669"/>
    <property type="project" value="UniProtKB-SubCell"/>
</dbReference>
<dbReference type="PANTHER" id="PTHR16171:SF13">
    <property type="entry name" value="BASIC IMMUNOGLOBULIN-LIKE VARIABLE MOTIF-CONTAINING PROTEIN"/>
    <property type="match status" value="1"/>
</dbReference>
<dbReference type="PANTHER" id="PTHR16171">
    <property type="entry name" value="DNA REPAIR PROTEIN COMPLEMENTING XP-G CELLS-RELATED"/>
    <property type="match status" value="1"/>
</dbReference>
<comment type="subcellular location">
    <subcellularLocation>
        <location evidence="1">Cytoplasm</location>
    </subcellularLocation>
    <subcellularLocation>
        <location evidence="1">Nucleus</location>
    </subcellularLocation>
</comment>
<comment type="similarity">
    <text evidence="3">Belongs to the BIVM family.</text>
</comment>
<reference key="1">
    <citation type="submission" date="2006-08" db="EMBL/GenBank/DDBJ databases">
        <authorList>
            <consortium name="NIH - Xenopus Gene Collection (XGC) project"/>
        </authorList>
    </citation>
    <scope>NUCLEOTIDE SEQUENCE [LARGE SCALE MRNA]</scope>
    <source>
        <tissue>Testis</tissue>
    </source>
</reference>